<organism>
    <name type="scientific">Vesicomyosocius okutanii subsp. Calyptogena okutanii (strain HA)</name>
    <dbReference type="NCBI Taxonomy" id="412965"/>
    <lineage>
        <taxon>Bacteria</taxon>
        <taxon>Pseudomonadati</taxon>
        <taxon>Pseudomonadota</taxon>
        <taxon>Gammaproteobacteria</taxon>
        <taxon>Candidatus Pseudothioglobaceae</taxon>
        <taxon>Candidatus Vesicomyosocius</taxon>
    </lineage>
</organism>
<reference key="1">
    <citation type="journal article" date="2007" name="Curr. Biol.">
        <title>Reduced genome of the thioautotrophic intracellular symbiont in a deep-sea clam, Calyptogena okutanii.</title>
        <authorList>
            <person name="Kuwahara H."/>
            <person name="Yoshida T."/>
            <person name="Takaki Y."/>
            <person name="Shimamura S."/>
            <person name="Nishi S."/>
            <person name="Harada M."/>
            <person name="Matsuyama K."/>
            <person name="Takishita K."/>
            <person name="Kawato M."/>
            <person name="Uematsu K."/>
            <person name="Fujiwara Y."/>
            <person name="Sato T."/>
            <person name="Kato C."/>
            <person name="Kitagawa M."/>
            <person name="Kato I."/>
            <person name="Maruyama T."/>
        </authorList>
    </citation>
    <scope>NUCLEOTIDE SEQUENCE [LARGE SCALE GENOMIC DNA]</scope>
    <source>
        <strain>HA</strain>
    </source>
</reference>
<keyword id="KW-0067">ATP-binding</keyword>
<keyword id="KW-0414">Isoprene biosynthesis</keyword>
<keyword id="KW-0418">Kinase</keyword>
<keyword id="KW-0547">Nucleotide-binding</keyword>
<keyword id="KW-1185">Reference proteome</keyword>
<keyword id="KW-0808">Transferase</keyword>
<dbReference type="EC" id="2.7.1.148" evidence="1"/>
<dbReference type="EMBL" id="AP009247">
    <property type="protein sequence ID" value="BAF61249.1"/>
    <property type="molecule type" value="Genomic_DNA"/>
</dbReference>
<dbReference type="RefSeq" id="WP_011929519.1">
    <property type="nucleotide sequence ID" value="NC_009465.1"/>
</dbReference>
<dbReference type="SMR" id="A5CXR1"/>
<dbReference type="STRING" id="412965.COSY_0115"/>
<dbReference type="KEGG" id="vok:COSY_0115"/>
<dbReference type="eggNOG" id="COG1947">
    <property type="taxonomic scope" value="Bacteria"/>
</dbReference>
<dbReference type="HOGENOM" id="CLU_053057_3_0_6"/>
<dbReference type="OrthoDB" id="9809438at2"/>
<dbReference type="UniPathway" id="UPA00056">
    <property type="reaction ID" value="UER00094"/>
</dbReference>
<dbReference type="Proteomes" id="UP000000247">
    <property type="component" value="Chromosome"/>
</dbReference>
<dbReference type="GO" id="GO:0050515">
    <property type="term" value="F:4-(cytidine 5'-diphospho)-2-C-methyl-D-erythritol kinase activity"/>
    <property type="evidence" value="ECO:0007669"/>
    <property type="project" value="UniProtKB-UniRule"/>
</dbReference>
<dbReference type="GO" id="GO:0005524">
    <property type="term" value="F:ATP binding"/>
    <property type="evidence" value="ECO:0007669"/>
    <property type="project" value="UniProtKB-UniRule"/>
</dbReference>
<dbReference type="GO" id="GO:0019288">
    <property type="term" value="P:isopentenyl diphosphate biosynthetic process, methylerythritol 4-phosphate pathway"/>
    <property type="evidence" value="ECO:0007669"/>
    <property type="project" value="UniProtKB-UniRule"/>
</dbReference>
<dbReference type="GO" id="GO:0016114">
    <property type="term" value="P:terpenoid biosynthetic process"/>
    <property type="evidence" value="ECO:0007669"/>
    <property type="project" value="InterPro"/>
</dbReference>
<dbReference type="Gene3D" id="3.30.230.10">
    <property type="match status" value="1"/>
</dbReference>
<dbReference type="Gene3D" id="3.30.70.890">
    <property type="entry name" value="GHMP kinase, C-terminal domain"/>
    <property type="match status" value="1"/>
</dbReference>
<dbReference type="HAMAP" id="MF_00061">
    <property type="entry name" value="IspE"/>
    <property type="match status" value="1"/>
</dbReference>
<dbReference type="InterPro" id="IPR013750">
    <property type="entry name" value="GHMP_kinase_C_dom"/>
</dbReference>
<dbReference type="InterPro" id="IPR036554">
    <property type="entry name" value="GHMP_kinase_C_sf"/>
</dbReference>
<dbReference type="InterPro" id="IPR006204">
    <property type="entry name" value="GHMP_kinase_N_dom"/>
</dbReference>
<dbReference type="InterPro" id="IPR004424">
    <property type="entry name" value="IspE"/>
</dbReference>
<dbReference type="InterPro" id="IPR020568">
    <property type="entry name" value="Ribosomal_Su5_D2-typ_SF"/>
</dbReference>
<dbReference type="InterPro" id="IPR014721">
    <property type="entry name" value="Ribsml_uS5_D2-typ_fold_subgr"/>
</dbReference>
<dbReference type="NCBIfam" id="TIGR00154">
    <property type="entry name" value="ispE"/>
    <property type="match status" value="1"/>
</dbReference>
<dbReference type="PANTHER" id="PTHR43527">
    <property type="entry name" value="4-DIPHOSPHOCYTIDYL-2-C-METHYL-D-ERYTHRITOL KINASE, CHLOROPLASTIC"/>
    <property type="match status" value="1"/>
</dbReference>
<dbReference type="PANTHER" id="PTHR43527:SF2">
    <property type="entry name" value="4-DIPHOSPHOCYTIDYL-2-C-METHYL-D-ERYTHRITOL KINASE, CHLOROPLASTIC"/>
    <property type="match status" value="1"/>
</dbReference>
<dbReference type="Pfam" id="PF08544">
    <property type="entry name" value="GHMP_kinases_C"/>
    <property type="match status" value="1"/>
</dbReference>
<dbReference type="Pfam" id="PF00288">
    <property type="entry name" value="GHMP_kinases_N"/>
    <property type="match status" value="1"/>
</dbReference>
<dbReference type="PIRSF" id="PIRSF010376">
    <property type="entry name" value="IspE"/>
    <property type="match status" value="1"/>
</dbReference>
<dbReference type="SUPFAM" id="SSF55060">
    <property type="entry name" value="GHMP Kinase, C-terminal domain"/>
    <property type="match status" value="1"/>
</dbReference>
<dbReference type="SUPFAM" id="SSF54211">
    <property type="entry name" value="Ribosomal protein S5 domain 2-like"/>
    <property type="match status" value="1"/>
</dbReference>
<protein>
    <recommendedName>
        <fullName evidence="1">4-diphosphocytidyl-2-C-methyl-D-erythritol kinase</fullName>
        <shortName evidence="1">CMK</shortName>
        <ecNumber evidence="1">2.7.1.148</ecNumber>
    </recommendedName>
    <alternativeName>
        <fullName evidence="1">4-(cytidine-5'-diphospho)-2-C-methyl-D-erythritol kinase</fullName>
    </alternativeName>
</protein>
<proteinExistence type="inferred from homology"/>
<feature type="chain" id="PRO_1000007901" description="4-diphosphocytidyl-2-C-methyl-D-erythritol kinase">
    <location>
        <begin position="1"/>
        <end position="285"/>
    </location>
</feature>
<feature type="active site" evidence="1">
    <location>
        <position position="10"/>
    </location>
</feature>
<feature type="active site" evidence="1">
    <location>
        <position position="135"/>
    </location>
</feature>
<feature type="binding site" evidence="1">
    <location>
        <begin position="93"/>
        <end position="103"/>
    </location>
    <ligand>
        <name>ATP</name>
        <dbReference type="ChEBI" id="CHEBI:30616"/>
    </ligand>
</feature>
<evidence type="ECO:0000255" key="1">
    <source>
        <dbReference type="HAMAP-Rule" id="MF_00061"/>
    </source>
</evidence>
<name>ISPE_VESOH</name>
<gene>
    <name evidence="1" type="primary">ispE</name>
    <name type="ordered locus">COSY_0115</name>
</gene>
<accession>A5CXR1</accession>
<sequence length="285" mass="31333">MPSTWLAPAKINLFLHINKRRKDNYHNLQTIFQLLDYCDKLTCTITNNGVIKRTSGNKSVKQDQDLIIKAAKALQQYTGTTLGANLSIVKNIPIGGGLGGGSSDAATTLVALNQLWDTKLTQAQLMKLGLNLGADVPVFIFAQSAWAEGIGNILSPIKTPDHYFLVVFINKHISTKEIFSHYALTISEPQGKIANFSELVNTHNDCLQVAIKLEAEIGVALEHLNTCYNRVGQARMSGTGSCVFNEFLTEKDALAAAKKVPKKWMSFVTRAINNSPIYNWAVAKR</sequence>
<comment type="function">
    <text evidence="1">Catalyzes the phosphorylation of the position 2 hydroxy group of 4-diphosphocytidyl-2C-methyl-D-erythritol.</text>
</comment>
<comment type="catalytic activity">
    <reaction evidence="1">
        <text>4-CDP-2-C-methyl-D-erythritol + ATP = 4-CDP-2-C-methyl-D-erythritol 2-phosphate + ADP + H(+)</text>
        <dbReference type="Rhea" id="RHEA:18437"/>
        <dbReference type="ChEBI" id="CHEBI:15378"/>
        <dbReference type="ChEBI" id="CHEBI:30616"/>
        <dbReference type="ChEBI" id="CHEBI:57823"/>
        <dbReference type="ChEBI" id="CHEBI:57919"/>
        <dbReference type="ChEBI" id="CHEBI:456216"/>
        <dbReference type="EC" id="2.7.1.148"/>
    </reaction>
</comment>
<comment type="pathway">
    <text evidence="1">Isoprenoid biosynthesis; isopentenyl diphosphate biosynthesis via DXP pathway; isopentenyl diphosphate from 1-deoxy-D-xylulose 5-phosphate: step 3/6.</text>
</comment>
<comment type="similarity">
    <text evidence="1">Belongs to the GHMP kinase family. IspE subfamily.</text>
</comment>